<name>HBBB_CATCL</name>
<evidence type="ECO:0000250" key="1">
    <source>
        <dbReference type="UniProtKB" id="P02140"/>
    </source>
</evidence>
<evidence type="ECO:0000255" key="2">
    <source>
        <dbReference type="PROSITE-ProRule" id="PRU00238"/>
    </source>
</evidence>
<evidence type="ECO:0000269" key="3">
    <source>
    </source>
</evidence>
<evidence type="ECO:0000303" key="4">
    <source>
    </source>
</evidence>
<evidence type="ECO:0000305" key="5"/>
<protein>
    <recommendedName>
        <fullName>Hemoglobin subunit beta-B</fullName>
    </recommendedName>
    <alternativeName>
        <fullName>Beta-B-globin</fullName>
    </alternativeName>
    <alternativeName>
        <fullName>Hemoglobin beta-B chain</fullName>
    </alternativeName>
</protein>
<keyword id="KW-0903">Direct protein sequencing</keyword>
<keyword id="KW-0349">Heme</keyword>
<keyword id="KW-0408">Iron</keyword>
<keyword id="KW-0479">Metal-binding</keyword>
<keyword id="KW-0561">Oxygen transport</keyword>
<keyword id="KW-0813">Transport</keyword>
<reference evidence="5" key="1">
    <citation type="journal article" date="1972" name="J. Biol. Chem.">
        <title>Multiple hemoglobins of catostomid fish. I. Isolation and characterization of the isohemoglobins from Catostomus clarkii.</title>
        <authorList>
            <person name="Powers D.A."/>
            <person name="Edmundson A.B."/>
        </authorList>
    </citation>
    <scope>PROTEIN SEQUENCE</scope>
    <scope>SUBUNIT</scope>
    <source>
        <tissue evidence="3">Blood</tissue>
    </source>
</reference>
<comment type="function">
    <text evidence="5">Involved in oxygen transport from gills to the various peripheral tissues.</text>
</comment>
<comment type="subunit">
    <text evidence="3">Heterotetramer of two alpha chains and two beta chains.</text>
</comment>
<comment type="tissue specificity">
    <text evidence="5">Red blood cells.</text>
</comment>
<comment type="miscellaneous">
    <text evidence="3">This fish has ten hemoglobins, 8 of which are anodal and 2 cathodal. The cathodal tetramers do not exhibit the Bohr effect, due to lack of the C-terminal His in the beta chains and to blocking of the alpha-amino group on the N-terminal residue of the alpha chains. The possession of both anodal and cathodal hemoglobins may be a physiological advantage for fish living in fast-moving water habitats.</text>
</comment>
<comment type="miscellaneous">
    <text evidence="3">This fish possesses 6 types of hemoglobin chains, including a major alpha chain, a minor alpha chain, two major beta chains, and two minor beta chains.</text>
</comment>
<comment type="similarity">
    <text evidence="2">Belongs to the globin family.</text>
</comment>
<feature type="chain" id="PRO_0000312766" description="Hemoglobin subunit beta-B">
    <location>
        <begin position="1"/>
        <end position="48"/>
    </location>
</feature>
<feature type="domain" description="Globin" evidence="2">
    <location>
        <begin position="2"/>
        <end position="48"/>
    </location>
</feature>
<feature type="non-terminal residue" evidence="4">
    <location>
        <position position="48"/>
    </location>
</feature>
<accession>P85313</accession>
<proteinExistence type="evidence at protein level"/>
<dbReference type="GO" id="GO:0020037">
    <property type="term" value="F:heme binding"/>
    <property type="evidence" value="ECO:0007669"/>
    <property type="project" value="InterPro"/>
</dbReference>
<dbReference type="GO" id="GO:0046872">
    <property type="term" value="F:metal ion binding"/>
    <property type="evidence" value="ECO:0007669"/>
    <property type="project" value="UniProtKB-KW"/>
</dbReference>
<dbReference type="GO" id="GO:0019825">
    <property type="term" value="F:oxygen binding"/>
    <property type="evidence" value="ECO:0007669"/>
    <property type="project" value="InterPro"/>
</dbReference>
<dbReference type="GO" id="GO:0005344">
    <property type="term" value="F:oxygen carrier activity"/>
    <property type="evidence" value="ECO:0007669"/>
    <property type="project" value="UniProtKB-KW"/>
</dbReference>
<dbReference type="Gene3D" id="1.10.490.10">
    <property type="entry name" value="Globins"/>
    <property type="match status" value="1"/>
</dbReference>
<dbReference type="InterPro" id="IPR000971">
    <property type="entry name" value="Globin"/>
</dbReference>
<dbReference type="InterPro" id="IPR009050">
    <property type="entry name" value="Globin-like_sf"/>
</dbReference>
<dbReference type="InterPro" id="IPR012292">
    <property type="entry name" value="Globin/Proto"/>
</dbReference>
<dbReference type="SUPFAM" id="SSF46458">
    <property type="entry name" value="Globin-like"/>
    <property type="match status" value="1"/>
</dbReference>
<dbReference type="PROSITE" id="PS01033">
    <property type="entry name" value="GLOBIN"/>
    <property type="match status" value="1"/>
</dbReference>
<gene>
    <name evidence="1 4" type="primary">hbbb</name>
</gene>
<sequence>VEWTDAERGAILSLWGKIDPDELGPALLARXXLVYXXTQRYFASFGDL</sequence>
<organism>
    <name type="scientific">Catostomus clarkii</name>
    <name type="common">Desert sucker</name>
    <dbReference type="NCBI Taxonomy" id="7970"/>
    <lineage>
        <taxon>Eukaryota</taxon>
        <taxon>Metazoa</taxon>
        <taxon>Chordata</taxon>
        <taxon>Craniata</taxon>
        <taxon>Vertebrata</taxon>
        <taxon>Euteleostomi</taxon>
        <taxon>Actinopterygii</taxon>
        <taxon>Neopterygii</taxon>
        <taxon>Teleostei</taxon>
        <taxon>Ostariophysi</taxon>
        <taxon>Cypriniformes</taxon>
        <taxon>Catostomoidei</taxon>
        <taxon>Catostomidae</taxon>
        <taxon>Pantosteus</taxon>
    </lineage>
</organism>